<dbReference type="EC" id="1.8.7.1" evidence="8"/>
<dbReference type="EMBL" id="Z49217">
    <property type="protein sequence ID" value="CAA89154.1"/>
    <property type="molecule type" value="mRNA"/>
</dbReference>
<dbReference type="EMBL" id="Y10157">
    <property type="protein sequence ID" value="CAA71239.1"/>
    <property type="status" value="ALT_SEQ"/>
    <property type="molecule type" value="Genomic_DNA"/>
</dbReference>
<dbReference type="EMBL" id="AL162875">
    <property type="protein sequence ID" value="CAB85565.1"/>
    <property type="molecule type" value="Genomic_DNA"/>
</dbReference>
<dbReference type="EMBL" id="CP002688">
    <property type="protein sequence ID" value="AED90762.1"/>
    <property type="molecule type" value="Genomic_DNA"/>
</dbReference>
<dbReference type="EMBL" id="AF325027">
    <property type="protein sequence ID" value="AAG40379.1"/>
    <property type="molecule type" value="mRNA"/>
</dbReference>
<dbReference type="EMBL" id="AY048290">
    <property type="protein sequence ID" value="AAK82552.1"/>
    <property type="status" value="ALT_SEQ"/>
    <property type="molecule type" value="mRNA"/>
</dbReference>
<dbReference type="EMBL" id="BT000593">
    <property type="protein sequence ID" value="AAN18162.1"/>
    <property type="status" value="ALT_SEQ"/>
    <property type="molecule type" value="mRNA"/>
</dbReference>
<dbReference type="EMBL" id="AK229873">
    <property type="protein sequence ID" value="BAF01702.1"/>
    <property type="molecule type" value="mRNA"/>
</dbReference>
<dbReference type="PIR" id="S71437">
    <property type="entry name" value="S71437"/>
</dbReference>
<dbReference type="PIR" id="T48455">
    <property type="entry name" value="T48455"/>
</dbReference>
<dbReference type="RefSeq" id="NP_196079.1">
    <property type="nucleotide sequence ID" value="NM_120541.4"/>
</dbReference>
<dbReference type="SMR" id="Q9LZ66"/>
<dbReference type="BioGRID" id="15615">
    <property type="interactions" value="1"/>
</dbReference>
<dbReference type="FunCoup" id="Q9LZ66">
    <property type="interactions" value="366"/>
</dbReference>
<dbReference type="IntAct" id="Q9LZ66">
    <property type="interactions" value="2"/>
</dbReference>
<dbReference type="STRING" id="3702.Q9LZ66"/>
<dbReference type="MetOSite" id="Q9LZ66"/>
<dbReference type="SwissPalm" id="Q9LZ66"/>
<dbReference type="PaxDb" id="3702-AT5G04590.1"/>
<dbReference type="ProteomicsDB" id="232619"/>
<dbReference type="EnsemblPlants" id="AT5G04590.1">
    <property type="protein sequence ID" value="AT5G04590.1"/>
    <property type="gene ID" value="AT5G04590"/>
</dbReference>
<dbReference type="GeneID" id="830336"/>
<dbReference type="Gramene" id="AT5G04590.1">
    <property type="protein sequence ID" value="AT5G04590.1"/>
    <property type="gene ID" value="AT5G04590"/>
</dbReference>
<dbReference type="KEGG" id="ath:AT5G04590"/>
<dbReference type="Araport" id="AT5G04590"/>
<dbReference type="TAIR" id="AT5G04590">
    <property type="gene designation" value="SIR"/>
</dbReference>
<dbReference type="eggNOG" id="KOG0560">
    <property type="taxonomic scope" value="Eukaryota"/>
</dbReference>
<dbReference type="HOGENOM" id="CLU_001975_3_0_1"/>
<dbReference type="InParanoid" id="Q9LZ66"/>
<dbReference type="OMA" id="WQMMLRL"/>
<dbReference type="OrthoDB" id="1688044at2759"/>
<dbReference type="PhylomeDB" id="Q9LZ66"/>
<dbReference type="BioCyc" id="MetaCyc:AT5G04590-MONOMER"/>
<dbReference type="PRO" id="PR:Q9LZ66"/>
<dbReference type="Proteomes" id="UP000006548">
    <property type="component" value="Chromosome 5"/>
</dbReference>
<dbReference type="ExpressionAtlas" id="Q9LZ66">
    <property type="expression patterns" value="baseline and differential"/>
</dbReference>
<dbReference type="GO" id="GO:0048046">
    <property type="term" value="C:apoplast"/>
    <property type="evidence" value="ECO:0007005"/>
    <property type="project" value="TAIR"/>
</dbReference>
<dbReference type="GO" id="GO:0009507">
    <property type="term" value="C:chloroplast"/>
    <property type="evidence" value="ECO:0007005"/>
    <property type="project" value="TAIR"/>
</dbReference>
<dbReference type="GO" id="GO:0009941">
    <property type="term" value="C:chloroplast envelope"/>
    <property type="evidence" value="ECO:0007005"/>
    <property type="project" value="TAIR"/>
</dbReference>
<dbReference type="GO" id="GO:0042644">
    <property type="term" value="C:chloroplast nucleoid"/>
    <property type="evidence" value="ECO:0000250"/>
    <property type="project" value="UniProtKB"/>
</dbReference>
<dbReference type="GO" id="GO:0009570">
    <property type="term" value="C:chloroplast stroma"/>
    <property type="evidence" value="ECO:0007005"/>
    <property type="project" value="TAIR"/>
</dbReference>
<dbReference type="GO" id="GO:0005886">
    <property type="term" value="C:plasma membrane"/>
    <property type="evidence" value="ECO:0007005"/>
    <property type="project" value="TAIR"/>
</dbReference>
<dbReference type="GO" id="GO:0009536">
    <property type="term" value="C:plastid"/>
    <property type="evidence" value="ECO:0000304"/>
    <property type="project" value="TAIR"/>
</dbReference>
<dbReference type="GO" id="GO:0010319">
    <property type="term" value="C:stromule"/>
    <property type="evidence" value="ECO:0000314"/>
    <property type="project" value="TAIR"/>
</dbReference>
<dbReference type="GO" id="GO:0051539">
    <property type="term" value="F:4 iron, 4 sulfur cluster binding"/>
    <property type="evidence" value="ECO:0007669"/>
    <property type="project" value="UniProtKB-KW"/>
</dbReference>
<dbReference type="GO" id="GO:0005507">
    <property type="term" value="F:copper ion binding"/>
    <property type="evidence" value="ECO:0007005"/>
    <property type="project" value="TAIR"/>
</dbReference>
<dbReference type="GO" id="GO:0003677">
    <property type="term" value="F:DNA binding"/>
    <property type="evidence" value="ECO:0000250"/>
    <property type="project" value="UniProtKB"/>
</dbReference>
<dbReference type="GO" id="GO:0020037">
    <property type="term" value="F:heme binding"/>
    <property type="evidence" value="ECO:0007669"/>
    <property type="project" value="InterPro"/>
</dbReference>
<dbReference type="GO" id="GO:0050311">
    <property type="term" value="F:sulfite reductase (ferredoxin) activity"/>
    <property type="evidence" value="ECO:0000315"/>
    <property type="project" value="UniProtKB"/>
</dbReference>
<dbReference type="GO" id="GO:0016002">
    <property type="term" value="F:sulfite reductase activity"/>
    <property type="evidence" value="ECO:0000314"/>
    <property type="project" value="TAIR"/>
</dbReference>
<dbReference type="GO" id="GO:0045892">
    <property type="term" value="P:negative regulation of DNA-templated transcription"/>
    <property type="evidence" value="ECO:0000250"/>
    <property type="project" value="UniProtKB"/>
</dbReference>
<dbReference type="GO" id="GO:0009409">
    <property type="term" value="P:response to cold"/>
    <property type="evidence" value="ECO:0000270"/>
    <property type="project" value="TAIR"/>
</dbReference>
<dbReference type="GO" id="GO:0019418">
    <property type="term" value="P:sulfide oxidation"/>
    <property type="evidence" value="ECO:0000250"/>
    <property type="project" value="UniProtKB"/>
</dbReference>
<dbReference type="GO" id="GO:0006790">
    <property type="term" value="P:sulfur compound metabolic process"/>
    <property type="evidence" value="ECO:0000315"/>
    <property type="project" value="TAIR"/>
</dbReference>
<dbReference type="FunFam" id="3.30.413.10:FF:000008">
    <property type="entry name" value="Sulfite reductase [ferredoxin], chloroplastic"/>
    <property type="match status" value="1"/>
</dbReference>
<dbReference type="FunFam" id="3.30.413.10:FF:000014">
    <property type="entry name" value="Sulfite reductase [ferredoxin], chloroplastic"/>
    <property type="match status" value="1"/>
</dbReference>
<dbReference type="Gene3D" id="3.30.413.10">
    <property type="entry name" value="Sulfite Reductase Hemoprotein, domain 1"/>
    <property type="match status" value="2"/>
</dbReference>
<dbReference type="InterPro" id="IPR005117">
    <property type="entry name" value="NiRdtase/SiRdtase_haem-b_fer"/>
</dbReference>
<dbReference type="InterPro" id="IPR036136">
    <property type="entry name" value="Nit/Sulf_reduc_fer-like_dom_sf"/>
</dbReference>
<dbReference type="InterPro" id="IPR006067">
    <property type="entry name" value="NO2/SO3_Rdtase_4Fe4S_dom"/>
</dbReference>
<dbReference type="InterPro" id="IPR045169">
    <property type="entry name" value="NO2/SO3_Rdtase_4Fe4S_prot"/>
</dbReference>
<dbReference type="InterPro" id="IPR045854">
    <property type="entry name" value="NO2/SO3_Rdtase_4Fe4S_sf"/>
</dbReference>
<dbReference type="InterPro" id="IPR006066">
    <property type="entry name" value="NO2/SO3_Rdtase_FeS/sirohaem_BS"/>
</dbReference>
<dbReference type="InterPro" id="IPR011787">
    <property type="entry name" value="SiR_ferredoxin-dep"/>
</dbReference>
<dbReference type="NCBIfam" id="NF010029">
    <property type="entry name" value="PRK13504.1"/>
    <property type="match status" value="1"/>
</dbReference>
<dbReference type="NCBIfam" id="TIGR02042">
    <property type="entry name" value="sir"/>
    <property type="match status" value="1"/>
</dbReference>
<dbReference type="PANTHER" id="PTHR11493:SF47">
    <property type="entry name" value="SULFITE REDUCTASE [NADPH] SUBUNIT BETA"/>
    <property type="match status" value="1"/>
</dbReference>
<dbReference type="PANTHER" id="PTHR11493">
    <property type="entry name" value="SULFITE REDUCTASE [NADPH] SUBUNIT BETA-RELATED"/>
    <property type="match status" value="1"/>
</dbReference>
<dbReference type="Pfam" id="PF01077">
    <property type="entry name" value="NIR_SIR"/>
    <property type="match status" value="2"/>
</dbReference>
<dbReference type="Pfam" id="PF03460">
    <property type="entry name" value="NIR_SIR_ferr"/>
    <property type="match status" value="2"/>
</dbReference>
<dbReference type="PRINTS" id="PR00397">
    <property type="entry name" value="SIROHAEM"/>
</dbReference>
<dbReference type="SUPFAM" id="SSF56014">
    <property type="entry name" value="Nitrite and sulphite reductase 4Fe-4S domain-like"/>
    <property type="match status" value="2"/>
</dbReference>
<dbReference type="SUPFAM" id="SSF55124">
    <property type="entry name" value="Nitrite/Sulfite reductase N-terminal domain-like"/>
    <property type="match status" value="2"/>
</dbReference>
<dbReference type="PROSITE" id="PS00365">
    <property type="entry name" value="NIR_SIR"/>
    <property type="match status" value="1"/>
</dbReference>
<proteinExistence type="evidence at protein level"/>
<gene>
    <name type="primary">SIR</name>
    <name type="ordered locus">At5g04590</name>
    <name type="ORF">T32M21.190</name>
</gene>
<reference key="1">
    <citation type="journal article" date="1996" name="Biochim. Biophys. Acta">
        <title>A cDNA clone from Arabidopsis thaliana encoding plastidic ferredoxin:sulfite reductase.</title>
        <authorList>
            <person name="Bruehl A."/>
            <person name="Haverkamp T."/>
            <person name="Gisselmann G."/>
            <person name="Schwenn J.D."/>
        </authorList>
    </citation>
    <scope>NUCLEOTIDE SEQUENCE [MRNA]</scope>
    <source>
        <strain>cv. Landsberg erecta</strain>
        <tissue>Leaf</tissue>
    </source>
</reference>
<reference key="2">
    <citation type="journal article" date="1998" name="Gene">
        <title>Isolation and characterization of a gene for assimilatory sulfite reductase from Arabidopsis thaliana.</title>
        <authorList>
            <person name="Bork C."/>
            <person name="Schwenn J.D."/>
            <person name="Hell R."/>
        </authorList>
    </citation>
    <scope>NUCLEOTIDE SEQUENCE [GENOMIC DNA]</scope>
    <scope>CATALYTIC ACTIVITY</scope>
    <scope>TISSUE SPECIFICITY</scope>
    <source>
        <strain>cv. Columbia</strain>
    </source>
</reference>
<reference key="3">
    <citation type="journal article" date="2000" name="Nature">
        <title>Sequence and analysis of chromosome 5 of the plant Arabidopsis thaliana.</title>
        <authorList>
            <person name="Tabata S."/>
            <person name="Kaneko T."/>
            <person name="Nakamura Y."/>
            <person name="Kotani H."/>
            <person name="Kato T."/>
            <person name="Asamizu E."/>
            <person name="Miyajima N."/>
            <person name="Sasamoto S."/>
            <person name="Kimura T."/>
            <person name="Hosouchi T."/>
            <person name="Kawashima K."/>
            <person name="Kohara M."/>
            <person name="Matsumoto M."/>
            <person name="Matsuno A."/>
            <person name="Muraki A."/>
            <person name="Nakayama S."/>
            <person name="Nakazaki N."/>
            <person name="Naruo K."/>
            <person name="Okumura S."/>
            <person name="Shinpo S."/>
            <person name="Takeuchi C."/>
            <person name="Wada T."/>
            <person name="Watanabe A."/>
            <person name="Yamada M."/>
            <person name="Yasuda M."/>
            <person name="Sato S."/>
            <person name="de la Bastide M."/>
            <person name="Huang E."/>
            <person name="Spiegel L."/>
            <person name="Gnoj L."/>
            <person name="O'Shaughnessy A."/>
            <person name="Preston R."/>
            <person name="Habermann K."/>
            <person name="Murray J."/>
            <person name="Johnson D."/>
            <person name="Rohlfing T."/>
            <person name="Nelson J."/>
            <person name="Stoneking T."/>
            <person name="Pepin K."/>
            <person name="Spieth J."/>
            <person name="Sekhon M."/>
            <person name="Armstrong J."/>
            <person name="Becker M."/>
            <person name="Belter E."/>
            <person name="Cordum H."/>
            <person name="Cordes M."/>
            <person name="Courtney L."/>
            <person name="Courtney W."/>
            <person name="Dante M."/>
            <person name="Du H."/>
            <person name="Edwards J."/>
            <person name="Fryman J."/>
            <person name="Haakensen B."/>
            <person name="Lamar E."/>
            <person name="Latreille P."/>
            <person name="Leonard S."/>
            <person name="Meyer R."/>
            <person name="Mulvaney E."/>
            <person name="Ozersky P."/>
            <person name="Riley A."/>
            <person name="Strowmatt C."/>
            <person name="Wagner-McPherson C."/>
            <person name="Wollam A."/>
            <person name="Yoakum M."/>
            <person name="Bell M."/>
            <person name="Dedhia N."/>
            <person name="Parnell L."/>
            <person name="Shah R."/>
            <person name="Rodriguez M."/>
            <person name="Hoon See L."/>
            <person name="Vil D."/>
            <person name="Baker J."/>
            <person name="Kirchoff K."/>
            <person name="Toth K."/>
            <person name="King L."/>
            <person name="Bahret A."/>
            <person name="Miller B."/>
            <person name="Marra M.A."/>
            <person name="Martienssen R."/>
            <person name="McCombie W.R."/>
            <person name="Wilson R.K."/>
            <person name="Murphy G."/>
            <person name="Bancroft I."/>
            <person name="Volckaert G."/>
            <person name="Wambutt R."/>
            <person name="Duesterhoeft A."/>
            <person name="Stiekema W."/>
            <person name="Pohl T."/>
            <person name="Entian K.-D."/>
            <person name="Terryn N."/>
            <person name="Hartley N."/>
            <person name="Bent E."/>
            <person name="Johnson S."/>
            <person name="Langham S.-A."/>
            <person name="McCullagh B."/>
            <person name="Robben J."/>
            <person name="Grymonprez B."/>
            <person name="Zimmermann W."/>
            <person name="Ramsperger U."/>
            <person name="Wedler H."/>
            <person name="Balke K."/>
            <person name="Wedler E."/>
            <person name="Peters S."/>
            <person name="van Staveren M."/>
            <person name="Dirkse W."/>
            <person name="Mooijman P."/>
            <person name="Klein Lankhorst R."/>
            <person name="Weitzenegger T."/>
            <person name="Bothe G."/>
            <person name="Rose M."/>
            <person name="Hauf J."/>
            <person name="Berneiser S."/>
            <person name="Hempel S."/>
            <person name="Feldpausch M."/>
            <person name="Lamberth S."/>
            <person name="Villarroel R."/>
            <person name="Gielen J."/>
            <person name="Ardiles W."/>
            <person name="Bents O."/>
            <person name="Lemcke K."/>
            <person name="Kolesov G."/>
            <person name="Mayer K.F.X."/>
            <person name="Rudd S."/>
            <person name="Schoof H."/>
            <person name="Schueller C."/>
            <person name="Zaccaria P."/>
            <person name="Mewes H.-W."/>
            <person name="Bevan M."/>
            <person name="Fransz P.F."/>
        </authorList>
    </citation>
    <scope>NUCLEOTIDE SEQUENCE [LARGE SCALE GENOMIC DNA]</scope>
    <source>
        <strain>cv. Columbia</strain>
    </source>
</reference>
<reference key="4">
    <citation type="journal article" date="2017" name="Plant J.">
        <title>Araport11: a complete reannotation of the Arabidopsis thaliana reference genome.</title>
        <authorList>
            <person name="Cheng C.Y."/>
            <person name="Krishnakumar V."/>
            <person name="Chan A.P."/>
            <person name="Thibaud-Nissen F."/>
            <person name="Schobel S."/>
            <person name="Town C.D."/>
        </authorList>
    </citation>
    <scope>GENOME REANNOTATION</scope>
    <source>
        <strain>cv. Columbia</strain>
    </source>
</reference>
<reference key="5">
    <citation type="journal article" date="2003" name="Science">
        <title>Empirical analysis of transcriptional activity in the Arabidopsis genome.</title>
        <authorList>
            <person name="Yamada K."/>
            <person name="Lim J."/>
            <person name="Dale J.M."/>
            <person name="Chen H."/>
            <person name="Shinn P."/>
            <person name="Palm C.J."/>
            <person name="Southwick A.M."/>
            <person name="Wu H.C."/>
            <person name="Kim C.J."/>
            <person name="Nguyen M."/>
            <person name="Pham P.K."/>
            <person name="Cheuk R.F."/>
            <person name="Karlin-Newmann G."/>
            <person name="Liu S.X."/>
            <person name="Lam B."/>
            <person name="Sakano H."/>
            <person name="Wu T."/>
            <person name="Yu G."/>
            <person name="Miranda M."/>
            <person name="Quach H.L."/>
            <person name="Tripp M."/>
            <person name="Chang C.H."/>
            <person name="Lee J.M."/>
            <person name="Toriumi M.J."/>
            <person name="Chan M.M."/>
            <person name="Tang C.C."/>
            <person name="Onodera C.S."/>
            <person name="Deng J.M."/>
            <person name="Akiyama K."/>
            <person name="Ansari Y."/>
            <person name="Arakawa T."/>
            <person name="Banh J."/>
            <person name="Banno F."/>
            <person name="Bowser L."/>
            <person name="Brooks S.Y."/>
            <person name="Carninci P."/>
            <person name="Chao Q."/>
            <person name="Choy N."/>
            <person name="Enju A."/>
            <person name="Goldsmith A.D."/>
            <person name="Gurjal M."/>
            <person name="Hansen N.F."/>
            <person name="Hayashizaki Y."/>
            <person name="Johnson-Hopson C."/>
            <person name="Hsuan V.W."/>
            <person name="Iida K."/>
            <person name="Karnes M."/>
            <person name="Khan S."/>
            <person name="Koesema E."/>
            <person name="Ishida J."/>
            <person name="Jiang P.X."/>
            <person name="Jones T."/>
            <person name="Kawai J."/>
            <person name="Kamiya A."/>
            <person name="Meyers C."/>
            <person name="Nakajima M."/>
            <person name="Narusaka M."/>
            <person name="Seki M."/>
            <person name="Sakurai T."/>
            <person name="Satou M."/>
            <person name="Tamse R."/>
            <person name="Vaysberg M."/>
            <person name="Wallender E.K."/>
            <person name="Wong C."/>
            <person name="Yamamura Y."/>
            <person name="Yuan S."/>
            <person name="Shinozaki K."/>
            <person name="Davis R.W."/>
            <person name="Theologis A."/>
            <person name="Ecker J.R."/>
        </authorList>
    </citation>
    <scope>NUCLEOTIDE SEQUENCE [LARGE SCALE MRNA]</scope>
    <source>
        <strain>cv. Columbia</strain>
    </source>
</reference>
<reference key="6">
    <citation type="submission" date="2006-07" db="EMBL/GenBank/DDBJ databases">
        <title>Large-scale analysis of RIKEN Arabidopsis full-length (RAFL) cDNAs.</title>
        <authorList>
            <person name="Totoki Y."/>
            <person name="Seki M."/>
            <person name="Ishida J."/>
            <person name="Nakajima M."/>
            <person name="Enju A."/>
            <person name="Kamiya A."/>
            <person name="Narusaka M."/>
            <person name="Shin-i T."/>
            <person name="Nakagawa M."/>
            <person name="Sakamoto N."/>
            <person name="Oishi K."/>
            <person name="Kohara Y."/>
            <person name="Kobayashi M."/>
            <person name="Toyoda A."/>
            <person name="Sakaki Y."/>
            <person name="Sakurai T."/>
            <person name="Iida K."/>
            <person name="Akiyama K."/>
            <person name="Satou M."/>
            <person name="Toyoda T."/>
            <person name="Konagaya A."/>
            <person name="Carninci P."/>
            <person name="Kawai J."/>
            <person name="Hayashizaki Y."/>
            <person name="Shinozaki K."/>
        </authorList>
    </citation>
    <scope>NUCLEOTIDE SEQUENCE [LARGE SCALE MRNA] OF 295-642</scope>
    <source>
        <strain>cv. Columbia</strain>
    </source>
</reference>
<reference key="7">
    <citation type="journal article" date="2007" name="Plant J.">
        <title>Sulfite oxidase protects plants against sulfur dioxide toxicity.</title>
        <authorList>
            <person name="Brychkova G."/>
            <person name="Xia Z."/>
            <person name="Yang G."/>
            <person name="Yesbergenova Z."/>
            <person name="Zhang Z."/>
            <person name="Davydov O."/>
            <person name="Fluhr R."/>
            <person name="Sagi M."/>
        </authorList>
    </citation>
    <scope>INDUCTION BY SULFUR DIOXIDE</scope>
</reference>
<reference key="8">
    <citation type="journal article" date="2008" name="PLoS ONE">
        <title>Sorting signals, N-terminal modifications and abundance of the chloroplast proteome.</title>
        <authorList>
            <person name="Zybailov B."/>
            <person name="Rutschow H."/>
            <person name="Friso G."/>
            <person name="Rudella A."/>
            <person name="Emanuelsson O."/>
            <person name="Sun Q."/>
            <person name="van Wijk K.J."/>
        </authorList>
    </citation>
    <scope>IDENTIFICATION BY MASS SPECTROMETRY</scope>
    <scope>SUBCELLULAR LOCATION [LARGE SCALE ANALYSIS]</scope>
</reference>
<reference key="9">
    <citation type="journal article" date="2010" name="Plant Cell">
        <title>Sulfite reductase defines a newly discovered bottleneck for assimilatory sulfate reduction and is essential for growth and development in Arabidopsis thaliana.</title>
        <authorList>
            <person name="Khan M.S."/>
            <person name="Haas F.H."/>
            <person name="Samami A.A."/>
            <person name="Gholami A.M."/>
            <person name="Bauer A."/>
            <person name="Fellenberg K."/>
            <person name="Reichelt M."/>
            <person name="Haensch R."/>
            <person name="Mendel R.R."/>
            <person name="Meyer A.J."/>
            <person name="Wirtz M."/>
            <person name="Hell R."/>
        </authorList>
    </citation>
    <scope>FUNCTION</scope>
    <source>
        <strain>cv. Columbia</strain>
    </source>
</reference>
<name>SIR_ARATH</name>
<keyword id="KW-0004">4Fe-4S</keyword>
<keyword id="KW-0150">Chloroplast</keyword>
<keyword id="KW-0238">DNA-binding</keyword>
<keyword id="KW-0349">Heme</keyword>
<keyword id="KW-0408">Iron</keyword>
<keyword id="KW-0411">Iron-sulfur</keyword>
<keyword id="KW-0479">Metal-binding</keyword>
<keyword id="KW-0560">Oxidoreductase</keyword>
<keyword id="KW-0934">Plastid</keyword>
<keyword id="KW-1185">Reference proteome</keyword>
<keyword id="KW-0883">Thioether bond</keyword>
<keyword id="KW-0809">Transit peptide</keyword>
<accession>Q9LZ66</accession>
<accession>O23650</accession>
<accession>Q0WMF4</accession>
<accession>Q42590</accession>
<accession>Q94AB9</accession>
<organism>
    <name type="scientific">Arabidopsis thaliana</name>
    <name type="common">Mouse-ear cress</name>
    <dbReference type="NCBI Taxonomy" id="3702"/>
    <lineage>
        <taxon>Eukaryota</taxon>
        <taxon>Viridiplantae</taxon>
        <taxon>Streptophyta</taxon>
        <taxon>Embryophyta</taxon>
        <taxon>Tracheophyta</taxon>
        <taxon>Spermatophyta</taxon>
        <taxon>Magnoliopsida</taxon>
        <taxon>eudicotyledons</taxon>
        <taxon>Gunneridae</taxon>
        <taxon>Pentapetalae</taxon>
        <taxon>rosids</taxon>
        <taxon>malvids</taxon>
        <taxon>Brassicales</taxon>
        <taxon>Brassicaceae</taxon>
        <taxon>Camelineae</taxon>
        <taxon>Arabidopsis</taxon>
    </lineage>
</organism>
<evidence type="ECO:0000250" key="1"/>
<evidence type="ECO:0000250" key="2">
    <source>
        <dbReference type="UniProtKB" id="Q75NZ0"/>
    </source>
</evidence>
<evidence type="ECO:0000255" key="3"/>
<evidence type="ECO:0000256" key="4">
    <source>
        <dbReference type="SAM" id="MobiDB-lite"/>
    </source>
</evidence>
<evidence type="ECO:0000269" key="5">
    <source>
    </source>
</evidence>
<evidence type="ECO:0000269" key="6">
    <source>
    </source>
</evidence>
<evidence type="ECO:0000269" key="7">
    <source>
    </source>
</evidence>
<evidence type="ECO:0000269" key="8">
    <source>
    </source>
</evidence>
<evidence type="ECO:0000305" key="9"/>
<protein>
    <recommendedName>
        <fullName>Assimilatory sulfite reductase (ferredoxin), chloroplastic</fullName>
        <shortName>AtSiR</shortName>
        <ecNumber evidence="8">1.8.7.1</ecNumber>
    </recommendedName>
    <alternativeName>
        <fullName>Sulfite reductase (ferredoxin)</fullName>
    </alternativeName>
</protein>
<comment type="function">
    <text evidence="7">Essential protein with sulfite reductase activity required in assimilatory sulfate reduction pathway during both primary and secondary metabolism and thus involved in development and growth.</text>
</comment>
<comment type="function">
    <text evidence="2">DNA-binding protein that binds to both double-stranded and single-stranded DNA without significant sequence specificity to reversibly repress the transcriptional activity of chloroplast nucleoids by promoting DNA compaction and possibly regulate DNA replication.</text>
</comment>
<comment type="catalytic activity">
    <reaction evidence="8">
        <text>hydrogen sulfide + 6 oxidized [2Fe-2S]-[ferredoxin] + 3 H2O = sulfite + 6 reduced [2Fe-2S]-[ferredoxin] + 7 H(+)</text>
        <dbReference type="Rhea" id="RHEA:23132"/>
        <dbReference type="Rhea" id="RHEA-COMP:10000"/>
        <dbReference type="Rhea" id="RHEA-COMP:10001"/>
        <dbReference type="ChEBI" id="CHEBI:15377"/>
        <dbReference type="ChEBI" id="CHEBI:15378"/>
        <dbReference type="ChEBI" id="CHEBI:17359"/>
        <dbReference type="ChEBI" id="CHEBI:29919"/>
        <dbReference type="ChEBI" id="CHEBI:33737"/>
        <dbReference type="ChEBI" id="CHEBI:33738"/>
        <dbReference type="EC" id="1.8.7.1"/>
    </reaction>
</comment>
<comment type="cofactor">
    <cofactor evidence="1">
        <name>siroheme</name>
        <dbReference type="ChEBI" id="CHEBI:60052"/>
    </cofactor>
    <text evidence="1">Binds 1 siroheme per subunit.</text>
</comment>
<comment type="cofactor">
    <cofactor evidence="1">
        <name>[4Fe-4S] cluster</name>
        <dbReference type="ChEBI" id="CHEBI:49883"/>
    </cofactor>
    <text evidence="1">Binds 1 [4Fe-4S] cluster per subunit.</text>
</comment>
<comment type="subunit">
    <text evidence="1">Monomer. Interacts with ferredoxin (By similarity).</text>
</comment>
<comment type="subcellular location">
    <subcellularLocation>
        <location evidence="1">Plastid</location>
        <location evidence="1">Chloroplast stroma</location>
        <location evidence="1">Chloroplast nucleoid</location>
    </subcellularLocation>
    <subcellularLocation>
        <location>Plastid stroma</location>
    </subcellularLocation>
    <subcellularLocation>
        <location evidence="6">Plastid</location>
        <location evidence="6">Chloroplast stroma</location>
    </subcellularLocation>
</comment>
<comment type="tissue specificity">
    <text evidence="8">Present in leaves and roots.</text>
</comment>
<comment type="induction">
    <text evidence="5">Rapidly induced by sulfur dioxide SO(2) in a sulfite oxidase (SO)-dependent manner.</text>
</comment>
<comment type="PTM">
    <text evidence="1">Phosphorylated; this phosphorylation reduces DNA-binding.</text>
</comment>
<comment type="similarity">
    <text evidence="9">Belongs to the nitrite and sulfite reductase 4Fe-4S domain family.</text>
</comment>
<comment type="sequence caution" evidence="9">
    <conflict type="erroneous termination">
        <sequence resource="EMBL-CDS" id="AAK82552"/>
    </conflict>
    <text>Truncated C-terminus.</text>
</comment>
<comment type="sequence caution" evidence="9">
    <conflict type="erroneous termination">
        <sequence resource="EMBL-CDS" id="AAN18162"/>
    </conflict>
    <text>Truncated C-terminus.</text>
</comment>
<comment type="sequence caution" evidence="9">
    <conflict type="erroneous gene model prediction">
        <sequence resource="EMBL-CDS" id="CAA71239"/>
    </conflict>
</comment>
<feature type="transit peptide" description="Chloroplast" evidence="3">
    <location>
        <begin position="1"/>
        <end position="61"/>
    </location>
</feature>
<feature type="chain" id="PRO_0000416844" description="Assimilatory sulfite reductase (ferredoxin), chloroplastic">
    <location>
        <begin position="62"/>
        <end position="642"/>
    </location>
</feature>
<feature type="region of interest" description="Disordered" evidence="4">
    <location>
        <begin position="46"/>
        <end position="74"/>
    </location>
</feature>
<feature type="binding site" evidence="1">
    <location>
        <position position="503"/>
    </location>
    <ligand>
        <name>[4Fe-4S] cluster</name>
        <dbReference type="ChEBI" id="CHEBI:49883"/>
    </ligand>
</feature>
<feature type="binding site" evidence="1">
    <location>
        <position position="509"/>
    </location>
    <ligand>
        <name>[4Fe-4S] cluster</name>
        <dbReference type="ChEBI" id="CHEBI:49883"/>
    </ligand>
</feature>
<feature type="binding site" evidence="1">
    <location>
        <position position="549"/>
    </location>
    <ligand>
        <name>[4Fe-4S] cluster</name>
        <dbReference type="ChEBI" id="CHEBI:49883"/>
    </ligand>
</feature>
<feature type="binding site" evidence="1">
    <location>
        <position position="553"/>
    </location>
    <ligand>
        <name>[4Fe-4S] cluster</name>
        <dbReference type="ChEBI" id="CHEBI:49883"/>
    </ligand>
</feature>
<feature type="binding site" description="axial binding residue" evidence="1">
    <location>
        <position position="553"/>
    </location>
    <ligand>
        <name>siroheme</name>
        <dbReference type="ChEBI" id="CHEBI:60052"/>
    </ligand>
    <ligandPart>
        <name>Fe</name>
        <dbReference type="ChEBI" id="CHEBI:18248"/>
    </ligandPart>
</feature>
<feature type="sequence conflict" description="In Ref. 5; AAK82552/AAN18162." evidence="9" ref="5">
    <original>R</original>
    <variation>K</variation>
    <location>
        <position position="203"/>
    </location>
</feature>
<feature type="sequence conflict" description="In Ref. 1; CAA89154." evidence="9" ref="1">
    <original>A</original>
    <variation>T</variation>
    <location>
        <position position="426"/>
    </location>
</feature>
<feature type="sequence conflict" description="In Ref. 2; CAA71239." evidence="9" ref="2">
    <original>A</original>
    <variation>R</variation>
    <location>
        <position position="554"/>
    </location>
</feature>
<sequence>MSSTFRAPAGAATVFTADQKIRLGRLDALRSSHSVFLGRYGRGGVPVPPSASSSSSSPIQAVSTPAKPETATKRSKVEIIKEKSNFIRYPLNEELLTEAPNVNESAVQLIKFHGSYQQYNREERGGRSYSFMLRTKNPSGKVPNQLYLTMDDLADEFGIGTLRLTTRQTFQLHGVLKQNLKTVMSSIIKNMGSTLGACGDLNRNVLAPAAPYVKKDYLFAQETADNIAALLSPQSGFYYDMWVDGEQFMTAEPPEVVKARNDNSHGTNFVDSPEPIYGTQFLPRKFKVAVTVPTDNSVDLLTNDIGVVVVSDENGEPQGFNIYVGGGMGRTHRMESTFARLAEPIGYVPKEDILYAVKAIVVTQREHGRRDDRKYSRMKYLISSWGIEKFRDVVEQYYGKKFEPSRELPEWEFKSYLGWHEQGDGAWFCGLHVDSGRVGGIMKKTLREVIEKYKIDVRITPNQNIVLCDIKTEWKRPITTVLAQAGLLQPEFVDPLNQTAMACPAFPLCPLAITEAERGIPSILKRVRAMFEKVGLDYDESVVIRVTGCPNGCARPYMAELGLVGDGPNSYQVWLGGTPNLTQIARSFMDKVKVHDLEKVCEPLFYHWKLERQTKESFGEYTTRMGFEKLKELIDTYKGVSQ</sequence>